<accession>A0A1D8PFL9</accession>
<organism>
    <name type="scientific">Candida albicans (strain SC5314 / ATCC MYA-2876)</name>
    <name type="common">Yeast</name>
    <dbReference type="NCBI Taxonomy" id="237561"/>
    <lineage>
        <taxon>Eukaryota</taxon>
        <taxon>Fungi</taxon>
        <taxon>Dikarya</taxon>
        <taxon>Ascomycota</taxon>
        <taxon>Saccharomycotina</taxon>
        <taxon>Pichiomycetes</taxon>
        <taxon>Debaryomycetaceae</taxon>
        <taxon>Candida/Lodderomyces clade</taxon>
        <taxon>Candida</taxon>
    </lineage>
</organism>
<protein>
    <recommendedName>
        <fullName evidence="2">Large ribosomal subunit protein eL14</fullName>
    </recommendedName>
    <alternativeName>
        <fullName>60S ribosomal protein L14</fullName>
    </alternativeName>
</protein>
<sequence>MSSTVKAANWRFVEVGRVVLVDNKELATIVEIIDQKRVLIDGPKIQRQAIALAKIVLTPIVLPNLPRGSRTATVTKKWAAADIDAKWAASGWAKKLANKERRSQLSDFERFQVMVLKKQRRFATKKALVKA</sequence>
<comment type="function">
    <text evidence="4">Component of the ribosome, a large ribonucleoprotein complex responsible for the synthesis of proteins in the cell. The small ribosomal subunit (SSU) binds messenger RNAs (mRNAs) and translates the encoded message by selecting cognate aminoacyl-transfer RNA (tRNA) molecules. The large subunit (LSU) contains the ribosomal catalytic site termed the peptidyl transferase center (PTC), which catalyzes the formation of peptide bonds, thereby polymerizing the amino acids delivered by tRNAs into a polypeptide chain. The nascent polypeptides leave the ribosome through a tunnel in the LSU and interact with protein factors that function in enzymatic processing, targeting, and the membrane insertion of nascent chains at the exit of the ribosomal tunnel.</text>
</comment>
<comment type="subunit">
    <text evidence="1">Component of the large ribosomal subunit (PubMed:35613268). Mature ribosomes consist of a small (40S) and a large (60S) subunit (PubMed:35613268). The 40S subunit contains about 32 different proteins and 1 molecule of RNA (18S) (PubMed:35613268). The 60S subunit contains 45 different proteins and 3 molecules of RNA (25S, 5.8S and 5S) (PubMed:35613268).</text>
</comment>
<comment type="subcellular location">
    <subcellularLocation>
        <location evidence="4">Cytoplasm</location>
    </subcellularLocation>
</comment>
<comment type="similarity">
    <text evidence="3">Belongs to the eukaryotic ribosomal protein eL14 family.</text>
</comment>
<feature type="chain" id="PRO_0000456528" description="Large ribosomal subunit protein eL14">
    <location>
        <begin position="1"/>
        <end position="131"/>
    </location>
</feature>
<proteinExistence type="evidence at protein level"/>
<keyword id="KW-0002">3D-structure</keyword>
<keyword id="KW-0963">Cytoplasm</keyword>
<keyword id="KW-1185">Reference proteome</keyword>
<keyword id="KW-0687">Ribonucleoprotein</keyword>
<keyword id="KW-0689">Ribosomal protein</keyword>
<reference key="1">
    <citation type="journal article" date="2004" name="Proc. Natl. Acad. Sci. U.S.A.">
        <title>The diploid genome sequence of Candida albicans.</title>
        <authorList>
            <person name="Jones T."/>
            <person name="Federspiel N.A."/>
            <person name="Chibana H."/>
            <person name="Dungan J."/>
            <person name="Kalman S."/>
            <person name="Magee B.B."/>
            <person name="Newport G."/>
            <person name="Thorstenson Y.R."/>
            <person name="Agabian N."/>
            <person name="Magee P.T."/>
            <person name="Davis R.W."/>
            <person name="Scherer S."/>
        </authorList>
    </citation>
    <scope>NUCLEOTIDE SEQUENCE [LARGE SCALE GENOMIC DNA]</scope>
    <source>
        <strain>SC5314 / ATCC MYA-2876</strain>
    </source>
</reference>
<reference key="2">
    <citation type="journal article" date="2007" name="Genome Biol.">
        <title>Assembly of the Candida albicans genome into sixteen supercontigs aligned on the eight chromosomes.</title>
        <authorList>
            <person name="van het Hoog M."/>
            <person name="Rast T.J."/>
            <person name="Martchenko M."/>
            <person name="Grindle S."/>
            <person name="Dignard D."/>
            <person name="Hogues H."/>
            <person name="Cuomo C."/>
            <person name="Berriman M."/>
            <person name="Scherer S."/>
            <person name="Magee B.B."/>
            <person name="Whiteway M."/>
            <person name="Chibana H."/>
            <person name="Nantel A."/>
            <person name="Magee P.T."/>
        </authorList>
    </citation>
    <scope>GENOME REANNOTATION</scope>
    <source>
        <strain>SC5314 / ATCC MYA-2876</strain>
    </source>
</reference>
<reference key="3">
    <citation type="journal article" date="2013" name="Genome Biol.">
        <title>Assembly of a phased diploid Candida albicans genome facilitates allele-specific measurements and provides a simple model for repeat and indel structure.</title>
        <authorList>
            <person name="Muzzey D."/>
            <person name="Schwartz K."/>
            <person name="Weissman J.S."/>
            <person name="Sherlock G."/>
        </authorList>
    </citation>
    <scope>NUCLEOTIDE SEQUENCE [LARGE SCALE GENOMIC DNA]</scope>
    <scope>GENOME REANNOTATION</scope>
    <source>
        <strain>SC5314 / ATCC MYA-2876</strain>
    </source>
</reference>
<reference evidence="5 6 7" key="4">
    <citation type="journal article" date="2022" name="Sci. Adv.">
        <title>E-site drug specificity of the human pathogen Candida albicans ribosome.</title>
        <authorList>
            <person name="Zgadzay Y."/>
            <person name="Kolosova O."/>
            <person name="Stetsenko A."/>
            <person name="Wu C."/>
            <person name="Bruchlen D."/>
            <person name="Usachev K."/>
            <person name="Validov S."/>
            <person name="Jenner L."/>
            <person name="Rogachev A."/>
            <person name="Yusupova G."/>
            <person name="Sachs M.S."/>
            <person name="Guskov A."/>
            <person name="Yusupov M."/>
        </authorList>
    </citation>
    <scope>STRUCTURE BY ELECTRON MICROSCOPY (2.32 ANGSTROMS) OF THE 80S RIBOSOME</scope>
    <scope>SUBUNIT</scope>
</reference>
<gene>
    <name evidence="2" type="primary">RPL14</name>
    <name type="synonym">RPL14B</name>
    <name type="ordered locus">orf19.4931.1</name>
    <name type="ORF">CAALFM_C113050WA</name>
</gene>
<dbReference type="EMBL" id="CP017623">
    <property type="protein sequence ID" value="AOW26915.1"/>
    <property type="molecule type" value="Genomic_DNA"/>
</dbReference>
<dbReference type="RefSeq" id="XP_019330719.1">
    <property type="nucleotide sequence ID" value="XM_019475174.1"/>
</dbReference>
<dbReference type="PDB" id="7PZY">
    <property type="method" value="EM"/>
    <property type="resolution" value="2.32 A"/>
    <property type="chains" value="u=1-131"/>
</dbReference>
<dbReference type="PDB" id="7Q08">
    <property type="method" value="EM"/>
    <property type="resolution" value="2.56 A"/>
    <property type="chains" value="u=1-131"/>
</dbReference>
<dbReference type="PDB" id="7Q0F">
    <property type="method" value="EM"/>
    <property type="resolution" value="2.64 A"/>
    <property type="chains" value="u=1-131"/>
</dbReference>
<dbReference type="PDB" id="7Q0P">
    <property type="method" value="EM"/>
    <property type="resolution" value="2.77 A"/>
    <property type="chains" value="u=1-131"/>
</dbReference>
<dbReference type="PDB" id="7Q0R">
    <property type="method" value="EM"/>
    <property type="resolution" value="2.67 A"/>
    <property type="chains" value="u=1-131"/>
</dbReference>
<dbReference type="PDB" id="8C3A">
    <property type="method" value="X-ray"/>
    <property type="resolution" value="3.00 A"/>
    <property type="chains" value="BH/u=1-131"/>
</dbReference>
<dbReference type="PDB" id="8OGJ">
    <property type="method" value="EM"/>
    <property type="resolution" value="3.10 A"/>
    <property type="chains" value="u=1-131"/>
</dbReference>
<dbReference type="PDB" id="8OH6">
    <property type="method" value="X-ray"/>
    <property type="resolution" value="3.35 A"/>
    <property type="chains" value="BH/u=1-131"/>
</dbReference>
<dbReference type="PDB" id="8OI5">
    <property type="method" value="X-ray"/>
    <property type="resolution" value="2.90 A"/>
    <property type="chains" value="BH/u=1-131"/>
</dbReference>
<dbReference type="PDB" id="8OJ3">
    <property type="method" value="X-ray"/>
    <property type="resolution" value="3.50 A"/>
    <property type="chains" value="BH/u=1-131"/>
</dbReference>
<dbReference type="PDBsum" id="7PZY"/>
<dbReference type="PDBsum" id="7Q08"/>
<dbReference type="PDBsum" id="7Q0F"/>
<dbReference type="PDBsum" id="7Q0P"/>
<dbReference type="PDBsum" id="7Q0R"/>
<dbReference type="PDBsum" id="8C3A"/>
<dbReference type="PDBsum" id="8OGJ"/>
<dbReference type="PDBsum" id="8OH6"/>
<dbReference type="PDBsum" id="8OI5"/>
<dbReference type="PDBsum" id="8OJ3"/>
<dbReference type="SMR" id="A0A1D8PFL9"/>
<dbReference type="FunCoup" id="A0A1D8PFL9">
    <property type="interactions" value="1160"/>
</dbReference>
<dbReference type="STRING" id="237561.A0A1D8PFL9"/>
<dbReference type="EnsemblFungi" id="C1_13050W_A-T">
    <property type="protein sequence ID" value="C1_13050W_A-T-p1"/>
    <property type="gene ID" value="C1_13050W_A"/>
</dbReference>
<dbReference type="GeneID" id="30515072"/>
<dbReference type="KEGG" id="cal:CAALFM_C113050WA"/>
<dbReference type="CGD" id="CAL0000179395">
    <property type="gene designation" value="RPL14"/>
</dbReference>
<dbReference type="VEuPathDB" id="FungiDB:C1_13050W_A"/>
<dbReference type="eggNOG" id="KOG3421">
    <property type="taxonomic scope" value="Eukaryota"/>
</dbReference>
<dbReference type="InParanoid" id="A0A1D8PFL9"/>
<dbReference type="OMA" id="ANWRFVE"/>
<dbReference type="OrthoDB" id="1875589at2759"/>
<dbReference type="Proteomes" id="UP000000559">
    <property type="component" value="Chromosome 1"/>
</dbReference>
<dbReference type="GO" id="GO:0009986">
    <property type="term" value="C:cell surface"/>
    <property type="evidence" value="ECO:0000314"/>
    <property type="project" value="CGD"/>
</dbReference>
<dbReference type="GO" id="GO:0022625">
    <property type="term" value="C:cytosolic large ribosomal subunit"/>
    <property type="evidence" value="ECO:0000318"/>
    <property type="project" value="GO_Central"/>
</dbReference>
<dbReference type="GO" id="GO:0030446">
    <property type="term" value="C:hyphal cell wall"/>
    <property type="evidence" value="ECO:0000314"/>
    <property type="project" value="CGD"/>
</dbReference>
<dbReference type="GO" id="GO:0030684">
    <property type="term" value="C:preribosome"/>
    <property type="evidence" value="ECO:0007669"/>
    <property type="project" value="EnsemblFungi"/>
</dbReference>
<dbReference type="GO" id="GO:0003723">
    <property type="term" value="F:RNA binding"/>
    <property type="evidence" value="ECO:0000318"/>
    <property type="project" value="GO_Central"/>
</dbReference>
<dbReference type="GO" id="GO:0003735">
    <property type="term" value="F:structural constituent of ribosome"/>
    <property type="evidence" value="ECO:0000318"/>
    <property type="project" value="GO_Central"/>
</dbReference>
<dbReference type="GO" id="GO:0042273">
    <property type="term" value="P:ribosomal large subunit biogenesis"/>
    <property type="evidence" value="ECO:0000318"/>
    <property type="project" value="GO_Central"/>
</dbReference>
<dbReference type="GO" id="GO:0006412">
    <property type="term" value="P:translation"/>
    <property type="evidence" value="ECO:0007669"/>
    <property type="project" value="InterPro"/>
</dbReference>
<dbReference type="CDD" id="cd23702">
    <property type="entry name" value="eL14"/>
    <property type="match status" value="1"/>
</dbReference>
<dbReference type="FunFam" id="2.30.30.30:FF:000030">
    <property type="entry name" value="60S ribosomal protein L14"/>
    <property type="match status" value="1"/>
</dbReference>
<dbReference type="Gene3D" id="2.30.30.30">
    <property type="match status" value="1"/>
</dbReference>
<dbReference type="Gene3D" id="6.10.250.2270">
    <property type="match status" value="1"/>
</dbReference>
<dbReference type="InterPro" id="IPR014722">
    <property type="entry name" value="Rib_uL2_dom2"/>
</dbReference>
<dbReference type="InterPro" id="IPR039660">
    <property type="entry name" value="Ribosomal_eL14"/>
</dbReference>
<dbReference type="InterPro" id="IPR002784">
    <property type="entry name" value="Ribosomal_eL14_dom"/>
</dbReference>
<dbReference type="InterPro" id="IPR008991">
    <property type="entry name" value="Translation_prot_SH3-like_sf"/>
</dbReference>
<dbReference type="PANTHER" id="PTHR11127">
    <property type="entry name" value="60S RIBOSOMAL PROTEIN L14"/>
    <property type="match status" value="1"/>
</dbReference>
<dbReference type="PANTHER" id="PTHR11127:SF2">
    <property type="entry name" value="LARGE RIBOSOMAL SUBUNIT PROTEIN EL14"/>
    <property type="match status" value="1"/>
</dbReference>
<dbReference type="Pfam" id="PF01929">
    <property type="entry name" value="Ribosomal_L14e"/>
    <property type="match status" value="1"/>
</dbReference>
<dbReference type="SUPFAM" id="SSF50104">
    <property type="entry name" value="Translation proteins SH3-like domain"/>
    <property type="match status" value="1"/>
</dbReference>
<evidence type="ECO:0000269" key="1">
    <source>
    </source>
</evidence>
<evidence type="ECO:0000303" key="2">
    <source>
    </source>
</evidence>
<evidence type="ECO:0000305" key="3"/>
<evidence type="ECO:0000305" key="4">
    <source>
    </source>
</evidence>
<evidence type="ECO:0007744" key="5">
    <source>
        <dbReference type="PDB" id="7PZY"/>
    </source>
</evidence>
<evidence type="ECO:0007744" key="6">
    <source>
        <dbReference type="PDB" id="7Q0F"/>
    </source>
</evidence>
<evidence type="ECO:0007744" key="7">
    <source>
        <dbReference type="PDB" id="7Q0P"/>
    </source>
</evidence>
<name>RL14_CANAL</name>